<protein>
    <recommendedName>
        <fullName evidence="1">UPF0354 protein Bcer98_3354</fullName>
    </recommendedName>
</protein>
<feature type="chain" id="PRO_1000087725" description="UPF0354 protein Bcer98_3354">
    <location>
        <begin position="1"/>
        <end position="270"/>
    </location>
</feature>
<sequence length="270" mass="31271">MKMTNKKMKKELMERLARPEWEFHYDSEKDVLRIEQKDTKKGINVSLPGVVAKWEVKKEAAIEDVVYYVTEALLAMHKEENQSGKIFPVIRSTSFPKEAEEGNPFIMTEHTAETRIYYALDSNKTYRLIDERLLQKLGLTEQQVREMALFNVRSLNYEFKQDQVAGNTFYFLNTNDGYDASRILNESLLQSMREKISGDMVVAVPHQDVLIIADIMNEIGYDIIAQMTMKFFAEGHVPITSLSFIYEDGEFEPIFILAKNRKKTNGKEKG</sequence>
<gene>
    <name type="ordered locus">Bcer98_3354</name>
</gene>
<dbReference type="EMBL" id="CP000764">
    <property type="protein sequence ID" value="ABS23569.1"/>
    <property type="molecule type" value="Genomic_DNA"/>
</dbReference>
<dbReference type="RefSeq" id="WP_012095813.1">
    <property type="nucleotide sequence ID" value="NC_009674.1"/>
</dbReference>
<dbReference type="STRING" id="315749.Bcer98_3354"/>
<dbReference type="GeneID" id="33898595"/>
<dbReference type="KEGG" id="bcy:Bcer98_3354"/>
<dbReference type="eggNOG" id="COG4848">
    <property type="taxonomic scope" value="Bacteria"/>
</dbReference>
<dbReference type="HOGENOM" id="CLU_085634_0_0_9"/>
<dbReference type="OrthoDB" id="154553at2"/>
<dbReference type="Proteomes" id="UP000002300">
    <property type="component" value="Chromosome"/>
</dbReference>
<dbReference type="HAMAP" id="MF_01548">
    <property type="entry name" value="UPF0354"/>
    <property type="match status" value="1"/>
</dbReference>
<dbReference type="InterPro" id="IPR010838">
    <property type="entry name" value="DUF1444"/>
</dbReference>
<dbReference type="NCBIfam" id="NF010189">
    <property type="entry name" value="PRK13668.1"/>
    <property type="match status" value="1"/>
</dbReference>
<dbReference type="Pfam" id="PF07285">
    <property type="entry name" value="DUF1444"/>
    <property type="match status" value="1"/>
</dbReference>
<dbReference type="PIRSF" id="PIRSF012562">
    <property type="entry name" value="UCP012562"/>
    <property type="match status" value="1"/>
</dbReference>
<proteinExistence type="inferred from homology"/>
<evidence type="ECO:0000255" key="1">
    <source>
        <dbReference type="HAMAP-Rule" id="MF_01548"/>
    </source>
</evidence>
<name>Y3354_BACCN</name>
<reference key="1">
    <citation type="journal article" date="2008" name="Chem. Biol. Interact.">
        <title>Extending the Bacillus cereus group genomics to putative food-borne pathogens of different toxicity.</title>
        <authorList>
            <person name="Lapidus A."/>
            <person name="Goltsman E."/>
            <person name="Auger S."/>
            <person name="Galleron N."/>
            <person name="Segurens B."/>
            <person name="Dossat C."/>
            <person name="Land M.L."/>
            <person name="Broussolle V."/>
            <person name="Brillard J."/>
            <person name="Guinebretiere M.-H."/>
            <person name="Sanchis V."/>
            <person name="Nguen-the C."/>
            <person name="Lereclus D."/>
            <person name="Richardson P."/>
            <person name="Wincker P."/>
            <person name="Weissenbach J."/>
            <person name="Ehrlich S.D."/>
            <person name="Sorokin A."/>
        </authorList>
    </citation>
    <scope>NUCLEOTIDE SEQUENCE [LARGE SCALE GENOMIC DNA]</scope>
    <source>
        <strain>DSM 22905 / CIP 110041 / 391-98 / NVH 391-98</strain>
    </source>
</reference>
<comment type="similarity">
    <text evidence="1">Belongs to the UPF0354 family.</text>
</comment>
<accession>A7GTW1</accession>
<organism>
    <name type="scientific">Bacillus cytotoxicus (strain DSM 22905 / CIP 110041 / 391-98 / NVH 391-98)</name>
    <dbReference type="NCBI Taxonomy" id="315749"/>
    <lineage>
        <taxon>Bacteria</taxon>
        <taxon>Bacillati</taxon>
        <taxon>Bacillota</taxon>
        <taxon>Bacilli</taxon>
        <taxon>Bacillales</taxon>
        <taxon>Bacillaceae</taxon>
        <taxon>Bacillus</taxon>
        <taxon>Bacillus cereus group</taxon>
    </lineage>
</organism>